<accession>A0K608</accession>
<reference key="1">
    <citation type="submission" date="2006-08" db="EMBL/GenBank/DDBJ databases">
        <title>Complete sequence of chromosome 1 of Burkholderia cenocepacia HI2424.</title>
        <authorList>
            <person name="Copeland A."/>
            <person name="Lucas S."/>
            <person name="Lapidus A."/>
            <person name="Barry K."/>
            <person name="Detter J.C."/>
            <person name="Glavina del Rio T."/>
            <person name="Hammon N."/>
            <person name="Israni S."/>
            <person name="Pitluck S."/>
            <person name="Chain P."/>
            <person name="Malfatti S."/>
            <person name="Shin M."/>
            <person name="Vergez L."/>
            <person name="Schmutz J."/>
            <person name="Larimer F."/>
            <person name="Land M."/>
            <person name="Hauser L."/>
            <person name="Kyrpides N."/>
            <person name="Kim E."/>
            <person name="LiPuma J.J."/>
            <person name="Gonzalez C.F."/>
            <person name="Konstantinidis K."/>
            <person name="Tiedje J.M."/>
            <person name="Richardson P."/>
        </authorList>
    </citation>
    <scope>NUCLEOTIDE SEQUENCE [LARGE SCALE GENOMIC DNA]</scope>
    <source>
        <strain>HI2424</strain>
    </source>
</reference>
<protein>
    <recommendedName>
        <fullName evidence="1">N-succinylglutamate 5-semialdehyde dehydrogenase</fullName>
        <ecNumber evidence="1">1.2.1.71</ecNumber>
    </recommendedName>
    <alternativeName>
        <fullName evidence="1">Succinylglutamic semialdehyde dehydrogenase</fullName>
        <shortName evidence="1">SGSD</shortName>
    </alternativeName>
</protein>
<dbReference type="EC" id="1.2.1.71" evidence="1"/>
<dbReference type="EMBL" id="CP000458">
    <property type="protein sequence ID" value="ABK07935.1"/>
    <property type="molecule type" value="Genomic_DNA"/>
</dbReference>
<dbReference type="RefSeq" id="WP_011544988.1">
    <property type="nucleotide sequence ID" value="NC_008542.1"/>
</dbReference>
<dbReference type="SMR" id="A0K608"/>
<dbReference type="KEGG" id="bch:Bcen2424_1183"/>
<dbReference type="HOGENOM" id="CLU_005391_1_0_4"/>
<dbReference type="UniPathway" id="UPA00185">
    <property type="reaction ID" value="UER00282"/>
</dbReference>
<dbReference type="GO" id="GO:0043824">
    <property type="term" value="F:succinylglutamate-semialdehyde dehydrogenase activity"/>
    <property type="evidence" value="ECO:0007669"/>
    <property type="project" value="UniProtKB-EC"/>
</dbReference>
<dbReference type="GO" id="GO:0019544">
    <property type="term" value="P:arginine catabolic process to glutamate"/>
    <property type="evidence" value="ECO:0007669"/>
    <property type="project" value="UniProtKB-UniRule"/>
</dbReference>
<dbReference type="GO" id="GO:0019545">
    <property type="term" value="P:arginine catabolic process to succinate"/>
    <property type="evidence" value="ECO:0007669"/>
    <property type="project" value="UniProtKB-UniRule"/>
</dbReference>
<dbReference type="CDD" id="cd07095">
    <property type="entry name" value="ALDH_SGSD_AstD"/>
    <property type="match status" value="1"/>
</dbReference>
<dbReference type="FunFam" id="3.40.605.10:FF:000010">
    <property type="entry name" value="N-succinylglutamate 5-semialdehyde dehydrogenase"/>
    <property type="match status" value="1"/>
</dbReference>
<dbReference type="Gene3D" id="3.40.605.10">
    <property type="entry name" value="Aldehyde Dehydrogenase, Chain A, domain 1"/>
    <property type="match status" value="1"/>
</dbReference>
<dbReference type="Gene3D" id="3.40.309.10">
    <property type="entry name" value="Aldehyde Dehydrogenase, Chain A, domain 2"/>
    <property type="match status" value="1"/>
</dbReference>
<dbReference type="HAMAP" id="MF_01174">
    <property type="entry name" value="Aldedh_AstD"/>
    <property type="match status" value="1"/>
</dbReference>
<dbReference type="InterPro" id="IPR016161">
    <property type="entry name" value="Ald_DH/histidinol_DH"/>
</dbReference>
<dbReference type="InterPro" id="IPR016163">
    <property type="entry name" value="Ald_DH_C"/>
</dbReference>
<dbReference type="InterPro" id="IPR016160">
    <property type="entry name" value="Ald_DH_CS_CYS"/>
</dbReference>
<dbReference type="InterPro" id="IPR029510">
    <property type="entry name" value="Ald_DH_CS_GLU"/>
</dbReference>
<dbReference type="InterPro" id="IPR016162">
    <property type="entry name" value="Ald_DH_N"/>
</dbReference>
<dbReference type="InterPro" id="IPR015590">
    <property type="entry name" value="Aldehyde_DH_dom"/>
</dbReference>
<dbReference type="InterPro" id="IPR017649">
    <property type="entry name" value="SuccinylGlu_semiald_DH_AstD"/>
</dbReference>
<dbReference type="NCBIfam" id="TIGR03240">
    <property type="entry name" value="arg_catab_astD"/>
    <property type="match status" value="1"/>
</dbReference>
<dbReference type="NCBIfam" id="NF006992">
    <property type="entry name" value="PRK09457.1"/>
    <property type="match status" value="1"/>
</dbReference>
<dbReference type="PANTHER" id="PTHR11699">
    <property type="entry name" value="ALDEHYDE DEHYDROGENASE-RELATED"/>
    <property type="match status" value="1"/>
</dbReference>
<dbReference type="Pfam" id="PF00171">
    <property type="entry name" value="Aldedh"/>
    <property type="match status" value="1"/>
</dbReference>
<dbReference type="SUPFAM" id="SSF53720">
    <property type="entry name" value="ALDH-like"/>
    <property type="match status" value="1"/>
</dbReference>
<dbReference type="PROSITE" id="PS00070">
    <property type="entry name" value="ALDEHYDE_DEHYDR_CYS"/>
    <property type="match status" value="1"/>
</dbReference>
<dbReference type="PROSITE" id="PS00687">
    <property type="entry name" value="ALDEHYDE_DEHYDR_GLU"/>
    <property type="match status" value="1"/>
</dbReference>
<evidence type="ECO:0000255" key="1">
    <source>
        <dbReference type="HAMAP-Rule" id="MF_01174"/>
    </source>
</evidence>
<sequence length="487" mass="51721">MTELFIDGAWVAGSGPVFASRNPGTDAVAWQGESASAADVDRAVASARRAFAGWSALDFEARCEIVKRFAALLTERKEAIATAIGRETGKPLWEARTEVASMAAKVGISIQAYQERTGEKRQDMADGVAVLRHRPHGVVAVFGPYNFPGHLPNGHIVPALIAGNTVVFKPSELAPGVARATVEVWQEAGLPAGVLNLVQGEKDTGIALANHRQIDGLFFTGSSDTGTLLHKQFGGRPEIVLALEMGGNNPLVIGEVEDIDAAVHHTIQSAFLSAGQRCTCARRIFVPQGAFGDRFLARFADVTSKITADVFDADPQPFMGAVISARAAAKLVDAQARLVEQGAKPIVAMAQRDPRLGFVNAAIVDVTGVANLPDEEHFGPLAQVVRYATFDEAIERANDTAFGLSAGLLADDAKVWEHFRRTIRAGIVNWNRPTNGASSAAPFGGTGRSGNHRPSAYYAADYCAYPMASVESTQLTLPASLSPGLHF</sequence>
<feature type="chain" id="PRO_1000065747" description="N-succinylglutamate 5-semialdehyde dehydrogenase">
    <location>
        <begin position="1"/>
        <end position="487"/>
    </location>
</feature>
<feature type="active site" evidence="1">
    <location>
        <position position="244"/>
    </location>
</feature>
<feature type="active site" evidence="1">
    <location>
        <position position="278"/>
    </location>
</feature>
<feature type="binding site" evidence="1">
    <location>
        <begin position="221"/>
        <end position="226"/>
    </location>
    <ligand>
        <name>NAD(+)</name>
        <dbReference type="ChEBI" id="CHEBI:57540"/>
    </ligand>
</feature>
<keyword id="KW-0056">Arginine metabolism</keyword>
<keyword id="KW-0520">NAD</keyword>
<keyword id="KW-0560">Oxidoreductase</keyword>
<gene>
    <name evidence="1" type="primary">astD</name>
    <name type="ordered locus">Bcen2424_1183</name>
</gene>
<organism>
    <name type="scientific">Burkholderia cenocepacia (strain HI2424)</name>
    <dbReference type="NCBI Taxonomy" id="331272"/>
    <lineage>
        <taxon>Bacteria</taxon>
        <taxon>Pseudomonadati</taxon>
        <taxon>Pseudomonadota</taxon>
        <taxon>Betaproteobacteria</taxon>
        <taxon>Burkholderiales</taxon>
        <taxon>Burkholderiaceae</taxon>
        <taxon>Burkholderia</taxon>
        <taxon>Burkholderia cepacia complex</taxon>
    </lineage>
</organism>
<proteinExistence type="inferred from homology"/>
<name>ASTD_BURCH</name>
<comment type="function">
    <text evidence="1">Catalyzes the NAD-dependent reduction of succinylglutamate semialdehyde into succinylglutamate.</text>
</comment>
<comment type="catalytic activity">
    <reaction evidence="1">
        <text>N-succinyl-L-glutamate 5-semialdehyde + NAD(+) + H2O = N-succinyl-L-glutamate + NADH + 2 H(+)</text>
        <dbReference type="Rhea" id="RHEA:10812"/>
        <dbReference type="ChEBI" id="CHEBI:15377"/>
        <dbReference type="ChEBI" id="CHEBI:15378"/>
        <dbReference type="ChEBI" id="CHEBI:57540"/>
        <dbReference type="ChEBI" id="CHEBI:57945"/>
        <dbReference type="ChEBI" id="CHEBI:58520"/>
        <dbReference type="ChEBI" id="CHEBI:58763"/>
        <dbReference type="EC" id="1.2.1.71"/>
    </reaction>
</comment>
<comment type="pathway">
    <text evidence="1">Amino-acid degradation; L-arginine degradation via AST pathway; L-glutamate and succinate from L-arginine: step 4/5.</text>
</comment>
<comment type="similarity">
    <text evidence="1">Belongs to the aldehyde dehydrogenase family. AstD subfamily.</text>
</comment>